<comment type="function">
    <text>Receptor for cysteinyl leukotrienes mediating bronchoconstriction of individuals with and without asthma. Stimulation by LTD4 results in the contraction and proliferation of smooth muscle, edema, eosinophil migration and damage to the mucus layer in the lung. This response is mediated via a G-protein that activates a phosphatidylinositol-calcium second messenger system. The rank order of affinities for the leukotrienes is LTD4 &gt;&gt; LTE4 = LTC4 &gt;&gt; LTB4.</text>
</comment>
<comment type="subcellular location">
    <subcellularLocation>
        <location>Cell membrane</location>
        <topology>Multi-pass membrane protein</topology>
    </subcellularLocation>
</comment>
<comment type="tissue specificity">
    <text>Widely expressed, with highest levels in spleen and peripheral blood leukocytes. Lower expression in several tissues, such as lung (mostly in smooth muscle bundles and alveolar macrophages), placenta, small intestine, pancreas, colon and heart.</text>
</comment>
<comment type="miscellaneous">
    <text>Selective antagonists, such as montelukast (Singulair), zafirlukast (Accolate) and pranlukast (Onon), are used in the treatment of the asthma crisis.</text>
</comment>
<comment type="similarity">
    <text evidence="2">Belongs to the G-protein coupled receptor 1 family.</text>
</comment>
<evidence type="ECO:0000255" key="1"/>
<evidence type="ECO:0000255" key="2">
    <source>
        <dbReference type="PROSITE-ProRule" id="PRU00521"/>
    </source>
</evidence>
<evidence type="ECO:0000305" key="3"/>
<evidence type="ECO:0007829" key="4">
    <source>
        <dbReference type="PDB" id="6RZ4"/>
    </source>
</evidence>
<evidence type="ECO:0007829" key="5">
    <source>
        <dbReference type="PDB" id="6RZ5"/>
    </source>
</evidence>
<dbReference type="EMBL" id="AF119711">
    <property type="protein sequence ID" value="AAD42285.1"/>
    <property type="molecule type" value="mRNA"/>
</dbReference>
<dbReference type="EMBL" id="AF133266">
    <property type="protein sequence ID" value="AAD42778.1"/>
    <property type="molecule type" value="mRNA"/>
</dbReference>
<dbReference type="EMBL" id="AY242130">
    <property type="protein sequence ID" value="AAO92297.1"/>
    <property type="molecule type" value="Genomic_DNA"/>
</dbReference>
<dbReference type="EMBL" id="AK313643">
    <property type="protein sequence ID" value="BAG36401.1"/>
    <property type="molecule type" value="mRNA"/>
</dbReference>
<dbReference type="EMBL" id="AL445202">
    <property type="status" value="NOT_ANNOTATED_CDS"/>
    <property type="molecule type" value="Genomic_DNA"/>
</dbReference>
<dbReference type="EMBL" id="CH471104">
    <property type="protein sequence ID" value="EAW98598.1"/>
    <property type="molecule type" value="Genomic_DNA"/>
</dbReference>
<dbReference type="EMBL" id="CH471104">
    <property type="protein sequence ID" value="EAW98599.1"/>
    <property type="molecule type" value="Genomic_DNA"/>
</dbReference>
<dbReference type="EMBL" id="BC035750">
    <property type="protein sequence ID" value="AAH35750.1"/>
    <property type="molecule type" value="mRNA"/>
</dbReference>
<dbReference type="CCDS" id="CCDS14439.1"/>
<dbReference type="RefSeq" id="NP_001269115.1">
    <property type="nucleotide sequence ID" value="NM_001282186.2"/>
</dbReference>
<dbReference type="RefSeq" id="NP_001269116.1">
    <property type="nucleotide sequence ID" value="NM_001282187.2"/>
</dbReference>
<dbReference type="RefSeq" id="NP_001269117.1">
    <property type="nucleotide sequence ID" value="NM_001282188.2"/>
</dbReference>
<dbReference type="RefSeq" id="NP_006630.1">
    <property type="nucleotide sequence ID" value="NM_006639.4"/>
</dbReference>
<dbReference type="PDB" id="6RZ4">
    <property type="method" value="X-ray"/>
    <property type="resolution" value="2.70 A"/>
    <property type="chains" value="A=1-311"/>
</dbReference>
<dbReference type="PDB" id="6RZ5">
    <property type="method" value="X-ray"/>
    <property type="resolution" value="2.53 A"/>
    <property type="chains" value="A/B=1-311"/>
</dbReference>
<dbReference type="PDBsum" id="6RZ4"/>
<dbReference type="PDBsum" id="6RZ5"/>
<dbReference type="SMR" id="Q9Y271"/>
<dbReference type="BioGRID" id="116014">
    <property type="interactions" value="1"/>
</dbReference>
<dbReference type="CORUM" id="Q9Y271"/>
<dbReference type="FunCoup" id="Q9Y271">
    <property type="interactions" value="924"/>
</dbReference>
<dbReference type="IntAct" id="Q9Y271">
    <property type="interactions" value="1"/>
</dbReference>
<dbReference type="STRING" id="9606.ENSP00000362401"/>
<dbReference type="BindingDB" id="Q9Y271"/>
<dbReference type="ChEMBL" id="CHEMBL1798"/>
<dbReference type="DrugBank" id="DB00587">
    <property type="generic name" value="Cinalukast"/>
</dbReference>
<dbReference type="DrugBank" id="DB09526">
    <property type="generic name" value="Hydroquinone"/>
</dbReference>
<dbReference type="DrugBank" id="DB08855">
    <property type="generic name" value="Leukotriene C4"/>
</dbReference>
<dbReference type="DrugBank" id="DB11858">
    <property type="generic name" value="Leukotriene D4"/>
</dbReference>
<dbReference type="DrugBank" id="DB13016">
    <property type="generic name" value="LY-2300559"/>
</dbReference>
<dbReference type="DrugBank" id="DB16227">
    <property type="generic name" value="Masilukast"/>
</dbReference>
<dbReference type="DrugBank" id="DB00471">
    <property type="generic name" value="Montelukast"/>
</dbReference>
<dbReference type="DrugBank" id="DB00716">
    <property type="generic name" value="Nedocromil"/>
</dbReference>
<dbReference type="DrugBank" id="DB01411">
    <property type="generic name" value="Pranlukast"/>
</dbReference>
<dbReference type="DrugBank" id="DB00549">
    <property type="generic name" value="Zafirlukast"/>
</dbReference>
<dbReference type="DrugCentral" id="Q9Y271"/>
<dbReference type="GuidetoPHARMACOLOGY" id="269"/>
<dbReference type="SwissLipids" id="SLP:000001582"/>
<dbReference type="TCDB" id="9.A.14.13.2">
    <property type="family name" value="the g-protein-coupled receptor (gpcr) family"/>
</dbReference>
<dbReference type="GlyCosmos" id="Q9Y271">
    <property type="glycosylation" value="4 sites, No reported glycans"/>
</dbReference>
<dbReference type="GlyGen" id="Q9Y271">
    <property type="glycosylation" value="4 sites"/>
</dbReference>
<dbReference type="iPTMnet" id="Q9Y271"/>
<dbReference type="PhosphoSitePlus" id="Q9Y271"/>
<dbReference type="BioMuta" id="CYSLTR1"/>
<dbReference type="DMDM" id="20138087"/>
<dbReference type="jPOST" id="Q9Y271"/>
<dbReference type="MassIVE" id="Q9Y271"/>
<dbReference type="PaxDb" id="9606-ENSP00000478492"/>
<dbReference type="PeptideAtlas" id="Q9Y271"/>
<dbReference type="ProteomicsDB" id="85673"/>
<dbReference type="Antibodypedia" id="548">
    <property type="antibodies" value="315 antibodies from 31 providers"/>
</dbReference>
<dbReference type="DNASU" id="10800"/>
<dbReference type="Ensembl" id="ENST00000373304.4">
    <property type="protein sequence ID" value="ENSP00000362401.3"/>
    <property type="gene ID" value="ENSG00000173198.6"/>
</dbReference>
<dbReference type="Ensembl" id="ENST00000614798.1">
    <property type="protein sequence ID" value="ENSP00000478492.1"/>
    <property type="gene ID" value="ENSG00000173198.6"/>
</dbReference>
<dbReference type="GeneID" id="10800"/>
<dbReference type="KEGG" id="hsa:10800"/>
<dbReference type="MANE-Select" id="ENST00000373304.4">
    <property type="protein sequence ID" value="ENSP00000362401.3"/>
    <property type="RefSeq nucleotide sequence ID" value="NM_006639.4"/>
    <property type="RefSeq protein sequence ID" value="NP_006630.1"/>
</dbReference>
<dbReference type="UCSC" id="uc004edb.5">
    <property type="organism name" value="human"/>
</dbReference>
<dbReference type="AGR" id="HGNC:17451"/>
<dbReference type="CTD" id="10800"/>
<dbReference type="DisGeNET" id="10800"/>
<dbReference type="GeneCards" id="CYSLTR1"/>
<dbReference type="HGNC" id="HGNC:17451">
    <property type="gene designation" value="CYSLTR1"/>
</dbReference>
<dbReference type="HPA" id="ENSG00000173198">
    <property type="expression patterns" value="Tissue enhanced (lymphoid)"/>
</dbReference>
<dbReference type="MalaCards" id="CYSLTR1"/>
<dbReference type="MIM" id="300201">
    <property type="type" value="gene"/>
</dbReference>
<dbReference type="neXtProt" id="NX_Q9Y271"/>
<dbReference type="OpenTargets" id="ENSG00000173198"/>
<dbReference type="PharmGKB" id="PA38453"/>
<dbReference type="VEuPathDB" id="HostDB:ENSG00000173198"/>
<dbReference type="eggNOG" id="ENOG502QUJU">
    <property type="taxonomic scope" value="Eukaryota"/>
</dbReference>
<dbReference type="GeneTree" id="ENSGT01130000278275"/>
<dbReference type="HOGENOM" id="CLU_009579_8_2_1"/>
<dbReference type="InParanoid" id="Q9Y271"/>
<dbReference type="OMA" id="FMPYHVQ"/>
<dbReference type="OrthoDB" id="9990906at2759"/>
<dbReference type="PAN-GO" id="Q9Y271">
    <property type="GO annotations" value="4 GO annotations based on evolutionary models"/>
</dbReference>
<dbReference type="PhylomeDB" id="Q9Y271"/>
<dbReference type="TreeFam" id="TF350009"/>
<dbReference type="PathwayCommons" id="Q9Y271"/>
<dbReference type="Reactome" id="R-HSA-391906">
    <property type="pathway name" value="Leukotriene receptors"/>
</dbReference>
<dbReference type="Reactome" id="R-HSA-416476">
    <property type="pathway name" value="G alpha (q) signalling events"/>
</dbReference>
<dbReference type="Reactome" id="R-HSA-9664535">
    <property type="pathway name" value="LTC4-CYSLTR mediated IL4 production"/>
</dbReference>
<dbReference type="Reactome" id="R-HSA-9679191">
    <property type="pathway name" value="Potential therapeutics for SARS"/>
</dbReference>
<dbReference type="SignaLink" id="Q9Y271"/>
<dbReference type="SIGNOR" id="Q9Y271"/>
<dbReference type="BioGRID-ORCS" id="10800">
    <property type="hits" value="9 hits in 777 CRISPR screens"/>
</dbReference>
<dbReference type="ChiTaRS" id="CYSLTR1">
    <property type="organism name" value="human"/>
</dbReference>
<dbReference type="GeneWiki" id="Cysteinyl_leukotriene_receptor_1"/>
<dbReference type="GenomeRNAi" id="10800"/>
<dbReference type="Pharos" id="Q9Y271">
    <property type="development level" value="Tclin"/>
</dbReference>
<dbReference type="PRO" id="PR:Q9Y271"/>
<dbReference type="Proteomes" id="UP000005640">
    <property type="component" value="Chromosome X"/>
</dbReference>
<dbReference type="RNAct" id="Q9Y271">
    <property type="molecule type" value="protein"/>
</dbReference>
<dbReference type="Bgee" id="ENSG00000173198">
    <property type="expression patterns" value="Expressed in buccal mucosa cell and 131 other cell types or tissues"/>
</dbReference>
<dbReference type="GO" id="GO:0016020">
    <property type="term" value="C:membrane"/>
    <property type="evidence" value="ECO:0000304"/>
    <property type="project" value="ProtInc"/>
</dbReference>
<dbReference type="GO" id="GO:0005886">
    <property type="term" value="C:plasma membrane"/>
    <property type="evidence" value="ECO:0000318"/>
    <property type="project" value="GO_Central"/>
</dbReference>
<dbReference type="GO" id="GO:0001631">
    <property type="term" value="F:cysteinyl leukotriene receptor activity"/>
    <property type="evidence" value="ECO:0000318"/>
    <property type="project" value="GO_Central"/>
</dbReference>
<dbReference type="GO" id="GO:0008528">
    <property type="term" value="F:G protein-coupled peptide receptor activity"/>
    <property type="evidence" value="ECO:0000318"/>
    <property type="project" value="GO_Central"/>
</dbReference>
<dbReference type="GO" id="GO:0004974">
    <property type="term" value="F:leukotriene receptor activity"/>
    <property type="evidence" value="ECO:0000304"/>
    <property type="project" value="ProtInc"/>
</dbReference>
<dbReference type="GO" id="GO:0006816">
    <property type="term" value="P:calcium ion transport"/>
    <property type="evidence" value="ECO:0007669"/>
    <property type="project" value="Ensembl"/>
</dbReference>
<dbReference type="GO" id="GO:0007166">
    <property type="term" value="P:cell surface receptor signaling pathway"/>
    <property type="evidence" value="ECO:0007669"/>
    <property type="project" value="Ensembl"/>
</dbReference>
<dbReference type="GO" id="GO:0006935">
    <property type="term" value="P:chemotaxis"/>
    <property type="evidence" value="ECO:0007669"/>
    <property type="project" value="Ensembl"/>
</dbReference>
<dbReference type="GO" id="GO:0006952">
    <property type="term" value="P:defense response"/>
    <property type="evidence" value="ECO:0000304"/>
    <property type="project" value="ProtInc"/>
</dbReference>
<dbReference type="GO" id="GO:0051649">
    <property type="term" value="P:establishment of localization in cell"/>
    <property type="evidence" value="ECO:0007669"/>
    <property type="project" value="Ensembl"/>
</dbReference>
<dbReference type="GO" id="GO:0002437">
    <property type="term" value="P:inflammatory response to antigenic stimulus"/>
    <property type="evidence" value="ECO:0007669"/>
    <property type="project" value="Ensembl"/>
</dbReference>
<dbReference type="GO" id="GO:0007218">
    <property type="term" value="P:neuropeptide signaling pathway"/>
    <property type="evidence" value="ECO:0000318"/>
    <property type="project" value="GO_Central"/>
</dbReference>
<dbReference type="GO" id="GO:0007204">
    <property type="term" value="P:positive regulation of cytosolic calcium ion concentration"/>
    <property type="evidence" value="ECO:0000304"/>
    <property type="project" value="ProtInc"/>
</dbReference>
<dbReference type="GO" id="GO:0007585">
    <property type="term" value="P:respiratory gaseous exchange by respiratory system"/>
    <property type="evidence" value="ECO:0000304"/>
    <property type="project" value="ProtInc"/>
</dbReference>
<dbReference type="CDD" id="cd15158">
    <property type="entry name" value="7tmA_CysLTR1"/>
    <property type="match status" value="1"/>
</dbReference>
<dbReference type="FunFam" id="1.20.1070.10:FF:000017">
    <property type="entry name" value="lysophosphatidic acid receptor 4"/>
    <property type="match status" value="1"/>
</dbReference>
<dbReference type="Gene3D" id="1.20.1070.10">
    <property type="entry name" value="Rhodopsin 7-helix transmembrane proteins"/>
    <property type="match status" value="1"/>
</dbReference>
<dbReference type="InterPro" id="IPR013310">
    <property type="entry name" value="CLT1_recept"/>
</dbReference>
<dbReference type="InterPro" id="IPR004071">
    <property type="entry name" value="Cyst_leuk_rcpt"/>
</dbReference>
<dbReference type="InterPro" id="IPR000276">
    <property type="entry name" value="GPCR_Rhodpsn"/>
</dbReference>
<dbReference type="InterPro" id="IPR017452">
    <property type="entry name" value="GPCR_Rhodpsn_7TM"/>
</dbReference>
<dbReference type="PANTHER" id="PTHR24231:SF45">
    <property type="entry name" value="CYSTEINYL LEUKOTRIENE RECEPTOR 1"/>
    <property type="match status" value="1"/>
</dbReference>
<dbReference type="PANTHER" id="PTHR24231">
    <property type="entry name" value="PURINOCEPTOR-RELATED G-PROTEIN COUPLED RECEPTOR"/>
    <property type="match status" value="1"/>
</dbReference>
<dbReference type="Pfam" id="PF00001">
    <property type="entry name" value="7tm_1"/>
    <property type="match status" value="1"/>
</dbReference>
<dbReference type="PRINTS" id="PR01902">
    <property type="entry name" value="CYSLT1RECPTR"/>
</dbReference>
<dbReference type="PRINTS" id="PR01533">
    <property type="entry name" value="CYSLTRECPTR"/>
</dbReference>
<dbReference type="PRINTS" id="PR00237">
    <property type="entry name" value="GPCRRHODOPSN"/>
</dbReference>
<dbReference type="SUPFAM" id="SSF81321">
    <property type="entry name" value="Family A G protein-coupled receptor-like"/>
    <property type="match status" value="1"/>
</dbReference>
<dbReference type="PROSITE" id="PS50262">
    <property type="entry name" value="G_PROTEIN_RECEP_F1_2"/>
    <property type="match status" value="1"/>
</dbReference>
<organism>
    <name type="scientific">Homo sapiens</name>
    <name type="common">Human</name>
    <dbReference type="NCBI Taxonomy" id="9606"/>
    <lineage>
        <taxon>Eukaryota</taxon>
        <taxon>Metazoa</taxon>
        <taxon>Chordata</taxon>
        <taxon>Craniata</taxon>
        <taxon>Vertebrata</taxon>
        <taxon>Euteleostomi</taxon>
        <taxon>Mammalia</taxon>
        <taxon>Eutheria</taxon>
        <taxon>Euarchontoglires</taxon>
        <taxon>Primates</taxon>
        <taxon>Haplorrhini</taxon>
        <taxon>Catarrhini</taxon>
        <taxon>Hominidae</taxon>
        <taxon>Homo</taxon>
    </lineage>
</organism>
<reference key="1">
    <citation type="journal article" date="1999" name="Nature">
        <title>Characterization of the human cysteinyl leukotriene CysLT1 receptor.</title>
        <authorList>
            <person name="Lynch K.R."/>
            <person name="O'Neill G.P."/>
            <person name="Liu Q."/>
            <person name="Im D.-S."/>
            <person name="Sawyer N."/>
            <person name="Metters K.M."/>
            <person name="Coulombe N."/>
            <person name="Abramovitz M."/>
            <person name="Figueroa D.J."/>
            <person name="Zeng Z."/>
            <person name="Connolly B.M."/>
            <person name="Bai C."/>
            <person name="Austin C.P."/>
            <person name="Chateauneuf A."/>
            <person name="Stocco R."/>
            <person name="Greig G.M."/>
            <person name="Kargman S."/>
            <person name="Hooks S.B."/>
            <person name="Hosfield E."/>
            <person name="Williams D.L. Jr."/>
            <person name="Ford-Hutchinson A.W."/>
            <person name="Caskey C.T."/>
            <person name="Evans J.F."/>
        </authorList>
    </citation>
    <scope>NUCLEOTIDE SEQUENCE [MRNA]</scope>
    <source>
        <tissue>Tonsil</tissue>
    </source>
</reference>
<reference key="2">
    <citation type="journal article" date="1999" name="Mol. Pharmacol.">
        <title>Identification, molecular cloning, expression, and characterization of a cysteinyl leukotriene receptor.</title>
        <authorList>
            <person name="Sarau H.M."/>
            <person name="Ames R.S."/>
            <person name="Chambers J."/>
            <person name="Ellis C."/>
            <person name="Elshourbagy N."/>
            <person name="Foley J.J."/>
            <person name="Schmidt D.B."/>
            <person name="Muccitelli R.M."/>
            <person name="Jenkins O."/>
            <person name="Murdock P.R."/>
            <person name="Herrity N.C."/>
            <person name="Halsey W."/>
            <person name="Sathe G."/>
            <person name="Muir A.I."/>
            <person name="Nuthulaganti P."/>
            <person name="Dytko G.M."/>
            <person name="Buckley P.T."/>
            <person name="Wilson S."/>
            <person name="Bergsma D.J."/>
            <person name="Hay D.W.P."/>
        </authorList>
    </citation>
    <scope>NUCLEOTIDE SEQUENCE [MRNA]</scope>
    <source>
        <tissue>Leukocyte</tissue>
        <tissue>Peripheral blood monocyte</tissue>
        <tissue>Spleen</tissue>
    </source>
</reference>
<reference key="3">
    <citation type="submission" date="2003-02" db="EMBL/GenBank/DDBJ databases">
        <title>Isolation of complete coding sequence for cysteinyl leukotriene receptor 1 (CYSLTR1).</title>
        <authorList>
            <person name="Warren C.N."/>
            <person name="Aronstam R.S."/>
            <person name="Sharma S.V."/>
        </authorList>
    </citation>
    <scope>NUCLEOTIDE SEQUENCE [GENOMIC DNA]</scope>
</reference>
<reference key="4">
    <citation type="journal article" date="2004" name="Nat. Genet.">
        <title>Complete sequencing and characterization of 21,243 full-length human cDNAs.</title>
        <authorList>
            <person name="Ota T."/>
            <person name="Suzuki Y."/>
            <person name="Nishikawa T."/>
            <person name="Otsuki T."/>
            <person name="Sugiyama T."/>
            <person name="Irie R."/>
            <person name="Wakamatsu A."/>
            <person name="Hayashi K."/>
            <person name="Sato H."/>
            <person name="Nagai K."/>
            <person name="Kimura K."/>
            <person name="Makita H."/>
            <person name="Sekine M."/>
            <person name="Obayashi M."/>
            <person name="Nishi T."/>
            <person name="Shibahara T."/>
            <person name="Tanaka T."/>
            <person name="Ishii S."/>
            <person name="Yamamoto J."/>
            <person name="Saito K."/>
            <person name="Kawai Y."/>
            <person name="Isono Y."/>
            <person name="Nakamura Y."/>
            <person name="Nagahari K."/>
            <person name="Murakami K."/>
            <person name="Yasuda T."/>
            <person name="Iwayanagi T."/>
            <person name="Wagatsuma M."/>
            <person name="Shiratori A."/>
            <person name="Sudo H."/>
            <person name="Hosoiri T."/>
            <person name="Kaku Y."/>
            <person name="Kodaira H."/>
            <person name="Kondo H."/>
            <person name="Sugawara M."/>
            <person name="Takahashi M."/>
            <person name="Kanda K."/>
            <person name="Yokoi T."/>
            <person name="Furuya T."/>
            <person name="Kikkawa E."/>
            <person name="Omura Y."/>
            <person name="Abe K."/>
            <person name="Kamihara K."/>
            <person name="Katsuta N."/>
            <person name="Sato K."/>
            <person name="Tanikawa M."/>
            <person name="Yamazaki M."/>
            <person name="Ninomiya K."/>
            <person name="Ishibashi T."/>
            <person name="Yamashita H."/>
            <person name="Murakawa K."/>
            <person name="Fujimori K."/>
            <person name="Tanai H."/>
            <person name="Kimata M."/>
            <person name="Watanabe M."/>
            <person name="Hiraoka S."/>
            <person name="Chiba Y."/>
            <person name="Ishida S."/>
            <person name="Ono Y."/>
            <person name="Takiguchi S."/>
            <person name="Watanabe S."/>
            <person name="Yosida M."/>
            <person name="Hotuta T."/>
            <person name="Kusano J."/>
            <person name="Kanehori K."/>
            <person name="Takahashi-Fujii A."/>
            <person name="Hara H."/>
            <person name="Tanase T.-O."/>
            <person name="Nomura Y."/>
            <person name="Togiya S."/>
            <person name="Komai F."/>
            <person name="Hara R."/>
            <person name="Takeuchi K."/>
            <person name="Arita M."/>
            <person name="Imose N."/>
            <person name="Musashino K."/>
            <person name="Yuuki H."/>
            <person name="Oshima A."/>
            <person name="Sasaki N."/>
            <person name="Aotsuka S."/>
            <person name="Yoshikawa Y."/>
            <person name="Matsunawa H."/>
            <person name="Ichihara T."/>
            <person name="Shiohata N."/>
            <person name="Sano S."/>
            <person name="Moriya S."/>
            <person name="Momiyama H."/>
            <person name="Satoh N."/>
            <person name="Takami S."/>
            <person name="Terashima Y."/>
            <person name="Suzuki O."/>
            <person name="Nakagawa S."/>
            <person name="Senoh A."/>
            <person name="Mizoguchi H."/>
            <person name="Goto Y."/>
            <person name="Shimizu F."/>
            <person name="Wakebe H."/>
            <person name="Hishigaki H."/>
            <person name="Watanabe T."/>
            <person name="Sugiyama A."/>
            <person name="Takemoto M."/>
            <person name="Kawakami B."/>
            <person name="Yamazaki M."/>
            <person name="Watanabe K."/>
            <person name="Kumagai A."/>
            <person name="Itakura S."/>
            <person name="Fukuzumi Y."/>
            <person name="Fujimori Y."/>
            <person name="Komiyama M."/>
            <person name="Tashiro H."/>
            <person name="Tanigami A."/>
            <person name="Fujiwara T."/>
            <person name="Ono T."/>
            <person name="Yamada K."/>
            <person name="Fujii Y."/>
            <person name="Ozaki K."/>
            <person name="Hirao M."/>
            <person name="Ohmori Y."/>
            <person name="Kawabata A."/>
            <person name="Hikiji T."/>
            <person name="Kobatake N."/>
            <person name="Inagaki H."/>
            <person name="Ikema Y."/>
            <person name="Okamoto S."/>
            <person name="Okitani R."/>
            <person name="Kawakami T."/>
            <person name="Noguchi S."/>
            <person name="Itoh T."/>
            <person name="Shigeta K."/>
            <person name="Senba T."/>
            <person name="Matsumura K."/>
            <person name="Nakajima Y."/>
            <person name="Mizuno T."/>
            <person name="Morinaga M."/>
            <person name="Sasaki M."/>
            <person name="Togashi T."/>
            <person name="Oyama M."/>
            <person name="Hata H."/>
            <person name="Watanabe M."/>
            <person name="Komatsu T."/>
            <person name="Mizushima-Sugano J."/>
            <person name="Satoh T."/>
            <person name="Shirai Y."/>
            <person name="Takahashi Y."/>
            <person name="Nakagawa K."/>
            <person name="Okumura K."/>
            <person name="Nagase T."/>
            <person name="Nomura N."/>
            <person name="Kikuchi H."/>
            <person name="Masuho Y."/>
            <person name="Yamashita R."/>
            <person name="Nakai K."/>
            <person name="Yada T."/>
            <person name="Nakamura Y."/>
            <person name="Ohara O."/>
            <person name="Isogai T."/>
            <person name="Sugano S."/>
        </authorList>
    </citation>
    <scope>NUCLEOTIDE SEQUENCE [LARGE SCALE MRNA]</scope>
    <source>
        <tissue>Uterus</tissue>
    </source>
</reference>
<reference key="5">
    <citation type="journal article" date="2005" name="Nature">
        <title>The DNA sequence of the human X chromosome.</title>
        <authorList>
            <person name="Ross M.T."/>
            <person name="Grafham D.V."/>
            <person name="Coffey A.J."/>
            <person name="Scherer S."/>
            <person name="McLay K."/>
            <person name="Muzny D."/>
            <person name="Platzer M."/>
            <person name="Howell G.R."/>
            <person name="Burrows C."/>
            <person name="Bird C.P."/>
            <person name="Frankish A."/>
            <person name="Lovell F.L."/>
            <person name="Howe K.L."/>
            <person name="Ashurst J.L."/>
            <person name="Fulton R.S."/>
            <person name="Sudbrak R."/>
            <person name="Wen G."/>
            <person name="Jones M.C."/>
            <person name="Hurles M.E."/>
            <person name="Andrews T.D."/>
            <person name="Scott C.E."/>
            <person name="Searle S."/>
            <person name="Ramser J."/>
            <person name="Whittaker A."/>
            <person name="Deadman R."/>
            <person name="Carter N.P."/>
            <person name="Hunt S.E."/>
            <person name="Chen R."/>
            <person name="Cree A."/>
            <person name="Gunaratne P."/>
            <person name="Havlak P."/>
            <person name="Hodgson A."/>
            <person name="Metzker M.L."/>
            <person name="Richards S."/>
            <person name="Scott G."/>
            <person name="Steffen D."/>
            <person name="Sodergren E."/>
            <person name="Wheeler D.A."/>
            <person name="Worley K.C."/>
            <person name="Ainscough R."/>
            <person name="Ambrose K.D."/>
            <person name="Ansari-Lari M.A."/>
            <person name="Aradhya S."/>
            <person name="Ashwell R.I."/>
            <person name="Babbage A.K."/>
            <person name="Bagguley C.L."/>
            <person name="Ballabio A."/>
            <person name="Banerjee R."/>
            <person name="Barker G.E."/>
            <person name="Barlow K.F."/>
            <person name="Barrett I.P."/>
            <person name="Bates K.N."/>
            <person name="Beare D.M."/>
            <person name="Beasley H."/>
            <person name="Beasley O."/>
            <person name="Beck A."/>
            <person name="Bethel G."/>
            <person name="Blechschmidt K."/>
            <person name="Brady N."/>
            <person name="Bray-Allen S."/>
            <person name="Bridgeman A.M."/>
            <person name="Brown A.J."/>
            <person name="Brown M.J."/>
            <person name="Bonnin D."/>
            <person name="Bruford E.A."/>
            <person name="Buhay C."/>
            <person name="Burch P."/>
            <person name="Burford D."/>
            <person name="Burgess J."/>
            <person name="Burrill W."/>
            <person name="Burton J."/>
            <person name="Bye J.M."/>
            <person name="Carder C."/>
            <person name="Carrel L."/>
            <person name="Chako J."/>
            <person name="Chapman J.C."/>
            <person name="Chavez D."/>
            <person name="Chen E."/>
            <person name="Chen G."/>
            <person name="Chen Y."/>
            <person name="Chen Z."/>
            <person name="Chinault C."/>
            <person name="Ciccodicola A."/>
            <person name="Clark S.Y."/>
            <person name="Clarke G."/>
            <person name="Clee C.M."/>
            <person name="Clegg S."/>
            <person name="Clerc-Blankenburg K."/>
            <person name="Clifford K."/>
            <person name="Cobley V."/>
            <person name="Cole C.G."/>
            <person name="Conquer J.S."/>
            <person name="Corby N."/>
            <person name="Connor R.E."/>
            <person name="David R."/>
            <person name="Davies J."/>
            <person name="Davis C."/>
            <person name="Davis J."/>
            <person name="Delgado O."/>
            <person name="Deshazo D."/>
            <person name="Dhami P."/>
            <person name="Ding Y."/>
            <person name="Dinh H."/>
            <person name="Dodsworth S."/>
            <person name="Draper H."/>
            <person name="Dugan-Rocha S."/>
            <person name="Dunham A."/>
            <person name="Dunn M."/>
            <person name="Durbin K.J."/>
            <person name="Dutta I."/>
            <person name="Eades T."/>
            <person name="Ellwood M."/>
            <person name="Emery-Cohen A."/>
            <person name="Errington H."/>
            <person name="Evans K.L."/>
            <person name="Faulkner L."/>
            <person name="Francis F."/>
            <person name="Frankland J."/>
            <person name="Fraser A.E."/>
            <person name="Galgoczy P."/>
            <person name="Gilbert J."/>
            <person name="Gill R."/>
            <person name="Gloeckner G."/>
            <person name="Gregory S.G."/>
            <person name="Gribble S."/>
            <person name="Griffiths C."/>
            <person name="Grocock R."/>
            <person name="Gu Y."/>
            <person name="Gwilliam R."/>
            <person name="Hamilton C."/>
            <person name="Hart E.A."/>
            <person name="Hawes A."/>
            <person name="Heath P.D."/>
            <person name="Heitmann K."/>
            <person name="Hennig S."/>
            <person name="Hernandez J."/>
            <person name="Hinzmann B."/>
            <person name="Ho S."/>
            <person name="Hoffs M."/>
            <person name="Howden P.J."/>
            <person name="Huckle E.J."/>
            <person name="Hume J."/>
            <person name="Hunt P.J."/>
            <person name="Hunt A.R."/>
            <person name="Isherwood J."/>
            <person name="Jacob L."/>
            <person name="Johnson D."/>
            <person name="Jones S."/>
            <person name="de Jong P.J."/>
            <person name="Joseph S.S."/>
            <person name="Keenan S."/>
            <person name="Kelly S."/>
            <person name="Kershaw J.K."/>
            <person name="Khan Z."/>
            <person name="Kioschis P."/>
            <person name="Klages S."/>
            <person name="Knights A.J."/>
            <person name="Kosiura A."/>
            <person name="Kovar-Smith C."/>
            <person name="Laird G.K."/>
            <person name="Langford C."/>
            <person name="Lawlor S."/>
            <person name="Leversha M."/>
            <person name="Lewis L."/>
            <person name="Liu W."/>
            <person name="Lloyd C."/>
            <person name="Lloyd D.M."/>
            <person name="Loulseged H."/>
            <person name="Loveland J.E."/>
            <person name="Lovell J.D."/>
            <person name="Lozado R."/>
            <person name="Lu J."/>
            <person name="Lyne R."/>
            <person name="Ma J."/>
            <person name="Maheshwari M."/>
            <person name="Matthews L.H."/>
            <person name="McDowall J."/>
            <person name="McLaren S."/>
            <person name="McMurray A."/>
            <person name="Meidl P."/>
            <person name="Meitinger T."/>
            <person name="Milne S."/>
            <person name="Miner G."/>
            <person name="Mistry S.L."/>
            <person name="Morgan M."/>
            <person name="Morris S."/>
            <person name="Mueller I."/>
            <person name="Mullikin J.C."/>
            <person name="Nguyen N."/>
            <person name="Nordsiek G."/>
            <person name="Nyakatura G."/>
            <person name="O'dell C.N."/>
            <person name="Okwuonu G."/>
            <person name="Palmer S."/>
            <person name="Pandian R."/>
            <person name="Parker D."/>
            <person name="Parrish J."/>
            <person name="Pasternak S."/>
            <person name="Patel D."/>
            <person name="Pearce A.V."/>
            <person name="Pearson D.M."/>
            <person name="Pelan S.E."/>
            <person name="Perez L."/>
            <person name="Porter K.M."/>
            <person name="Ramsey Y."/>
            <person name="Reichwald K."/>
            <person name="Rhodes S."/>
            <person name="Ridler K.A."/>
            <person name="Schlessinger D."/>
            <person name="Schueler M.G."/>
            <person name="Sehra H.K."/>
            <person name="Shaw-Smith C."/>
            <person name="Shen H."/>
            <person name="Sheridan E.M."/>
            <person name="Shownkeen R."/>
            <person name="Skuce C.D."/>
            <person name="Smith M.L."/>
            <person name="Sotheran E.C."/>
            <person name="Steingruber H.E."/>
            <person name="Steward C.A."/>
            <person name="Storey R."/>
            <person name="Swann R.M."/>
            <person name="Swarbreck D."/>
            <person name="Tabor P.E."/>
            <person name="Taudien S."/>
            <person name="Taylor T."/>
            <person name="Teague B."/>
            <person name="Thomas K."/>
            <person name="Thorpe A."/>
            <person name="Timms K."/>
            <person name="Tracey A."/>
            <person name="Trevanion S."/>
            <person name="Tromans A.C."/>
            <person name="d'Urso M."/>
            <person name="Verduzco D."/>
            <person name="Villasana D."/>
            <person name="Waldron L."/>
            <person name="Wall M."/>
            <person name="Wang Q."/>
            <person name="Warren J."/>
            <person name="Warry G.L."/>
            <person name="Wei X."/>
            <person name="West A."/>
            <person name="Whitehead S.L."/>
            <person name="Whiteley M.N."/>
            <person name="Wilkinson J.E."/>
            <person name="Willey D.L."/>
            <person name="Williams G."/>
            <person name="Williams L."/>
            <person name="Williamson A."/>
            <person name="Williamson H."/>
            <person name="Wilming L."/>
            <person name="Woodmansey R.L."/>
            <person name="Wray P.W."/>
            <person name="Yen J."/>
            <person name="Zhang J."/>
            <person name="Zhou J."/>
            <person name="Zoghbi H."/>
            <person name="Zorilla S."/>
            <person name="Buck D."/>
            <person name="Reinhardt R."/>
            <person name="Poustka A."/>
            <person name="Rosenthal A."/>
            <person name="Lehrach H."/>
            <person name="Meindl A."/>
            <person name="Minx P.J."/>
            <person name="Hillier L.W."/>
            <person name="Willard H.F."/>
            <person name="Wilson R.K."/>
            <person name="Waterston R.H."/>
            <person name="Rice C.M."/>
            <person name="Vaudin M."/>
            <person name="Coulson A."/>
            <person name="Nelson D.L."/>
            <person name="Weinstock G."/>
            <person name="Sulston J.E."/>
            <person name="Durbin R.M."/>
            <person name="Hubbard T."/>
            <person name="Gibbs R.A."/>
            <person name="Beck S."/>
            <person name="Rogers J."/>
            <person name="Bentley D.R."/>
        </authorList>
    </citation>
    <scope>NUCLEOTIDE SEQUENCE [LARGE SCALE GENOMIC DNA]</scope>
</reference>
<reference key="6">
    <citation type="submission" date="2005-09" db="EMBL/GenBank/DDBJ databases">
        <authorList>
            <person name="Mural R.J."/>
            <person name="Istrail S."/>
            <person name="Sutton G.G."/>
            <person name="Florea L."/>
            <person name="Halpern A.L."/>
            <person name="Mobarry C.M."/>
            <person name="Lippert R."/>
            <person name="Walenz B."/>
            <person name="Shatkay H."/>
            <person name="Dew I."/>
            <person name="Miller J.R."/>
            <person name="Flanigan M.J."/>
            <person name="Edwards N.J."/>
            <person name="Bolanos R."/>
            <person name="Fasulo D."/>
            <person name="Halldorsson B.V."/>
            <person name="Hannenhalli S."/>
            <person name="Turner R."/>
            <person name="Yooseph S."/>
            <person name="Lu F."/>
            <person name="Nusskern D.R."/>
            <person name="Shue B.C."/>
            <person name="Zheng X.H."/>
            <person name="Zhong F."/>
            <person name="Delcher A.L."/>
            <person name="Huson D.H."/>
            <person name="Kravitz S.A."/>
            <person name="Mouchard L."/>
            <person name="Reinert K."/>
            <person name="Remington K.A."/>
            <person name="Clark A.G."/>
            <person name="Waterman M.S."/>
            <person name="Eichler E.E."/>
            <person name="Adams M.D."/>
            <person name="Hunkapiller M.W."/>
            <person name="Myers E.W."/>
            <person name="Venter J.C."/>
        </authorList>
    </citation>
    <scope>NUCLEOTIDE SEQUENCE [LARGE SCALE GENOMIC DNA]</scope>
</reference>
<reference key="7">
    <citation type="journal article" date="2004" name="Genome Res.">
        <title>The status, quality, and expansion of the NIH full-length cDNA project: the Mammalian Gene Collection (MGC).</title>
        <authorList>
            <consortium name="The MGC Project Team"/>
        </authorList>
    </citation>
    <scope>NUCLEOTIDE SEQUENCE [LARGE SCALE MRNA]</scope>
    <source>
        <tissue>Pancreas</tissue>
    </source>
</reference>
<accession>Q9Y271</accession>
<accession>B2R954</accession>
<accession>D3DTE4</accession>
<accession>Q5JS94</accession>
<accession>Q8IV19</accession>
<gene>
    <name type="primary">CYSLTR1</name>
    <name type="synonym">CYSLT1</name>
</gene>
<protein>
    <recommendedName>
        <fullName>Cysteinyl leukotriene receptor 1</fullName>
        <shortName>CysLTR1</shortName>
    </recommendedName>
    <alternativeName>
        <fullName>Cysteinyl leukotriene D4 receptor</fullName>
        <shortName>LTD4 receptor</shortName>
    </alternativeName>
    <alternativeName>
        <fullName>G-protein coupled receptor HG55</fullName>
    </alternativeName>
    <alternativeName>
        <fullName>HMTMF81</fullName>
    </alternativeName>
</protein>
<name>CLTR1_HUMAN</name>
<proteinExistence type="evidence at protein level"/>
<keyword id="KW-0002">3D-structure</keyword>
<keyword id="KW-1003">Cell membrane</keyword>
<keyword id="KW-1015">Disulfide bond</keyword>
<keyword id="KW-0297">G-protein coupled receptor</keyword>
<keyword id="KW-0325">Glycoprotein</keyword>
<keyword id="KW-0472">Membrane</keyword>
<keyword id="KW-1267">Proteomics identification</keyword>
<keyword id="KW-0675">Receptor</keyword>
<keyword id="KW-1185">Reference proteome</keyword>
<keyword id="KW-0807">Transducer</keyword>
<keyword id="KW-0812">Transmembrane</keyword>
<keyword id="KW-1133">Transmembrane helix</keyword>
<feature type="chain" id="PRO_0000069299" description="Cysteinyl leukotriene receptor 1">
    <location>
        <begin position="1"/>
        <end position="337"/>
    </location>
</feature>
<feature type="topological domain" description="Extracellular" evidence="1">
    <location>
        <begin position="1"/>
        <end position="28"/>
    </location>
</feature>
<feature type="transmembrane region" description="Helical; Name=1" evidence="1">
    <location>
        <begin position="29"/>
        <end position="49"/>
    </location>
</feature>
<feature type="topological domain" description="Cytoplasmic" evidence="1">
    <location>
        <begin position="50"/>
        <end position="57"/>
    </location>
</feature>
<feature type="transmembrane region" description="Helical; Name=2" evidence="1">
    <location>
        <begin position="58"/>
        <end position="78"/>
    </location>
</feature>
<feature type="topological domain" description="Extracellular" evidence="1">
    <location>
        <begin position="79"/>
        <end position="106"/>
    </location>
</feature>
<feature type="transmembrane region" description="Helical; Name=3" evidence="1">
    <location>
        <begin position="107"/>
        <end position="127"/>
    </location>
</feature>
<feature type="topological domain" description="Cytoplasmic" evidence="1">
    <location>
        <begin position="128"/>
        <end position="141"/>
    </location>
</feature>
<feature type="transmembrane region" description="Helical; Name=4" evidence="1">
    <location>
        <begin position="142"/>
        <end position="162"/>
    </location>
</feature>
<feature type="topological domain" description="Extracellular" evidence="1">
    <location>
        <begin position="163"/>
        <end position="193"/>
    </location>
</feature>
<feature type="transmembrane region" description="Helical; Name=5" evidence="1">
    <location>
        <begin position="194"/>
        <end position="214"/>
    </location>
</feature>
<feature type="topological domain" description="Cytoplasmic" evidence="1">
    <location>
        <begin position="215"/>
        <end position="230"/>
    </location>
</feature>
<feature type="transmembrane region" description="Helical; Name=6" evidence="1">
    <location>
        <begin position="231"/>
        <end position="251"/>
    </location>
</feature>
<feature type="topological domain" description="Extracellular" evidence="1">
    <location>
        <begin position="252"/>
        <end position="276"/>
    </location>
</feature>
<feature type="transmembrane region" description="Helical; Name=7" evidence="1">
    <location>
        <begin position="277"/>
        <end position="297"/>
    </location>
</feature>
<feature type="topological domain" description="Cytoplasmic" evidence="1">
    <location>
        <begin position="298"/>
        <end position="337"/>
    </location>
</feature>
<feature type="glycosylation site" description="N-linked (GlcNAc...) asparagine" evidence="1">
    <location>
        <position position="6"/>
    </location>
</feature>
<feature type="glycosylation site" description="N-linked (GlcNAc...) asparagine" evidence="1">
    <location>
        <position position="169"/>
    </location>
</feature>
<feature type="glycosylation site" description="N-linked (GlcNAc...) asparagine" evidence="1">
    <location>
        <position position="180"/>
    </location>
</feature>
<feature type="glycosylation site" description="N-linked (GlcNAc...) asparagine" evidence="1">
    <location>
        <position position="262"/>
    </location>
</feature>
<feature type="disulfide bond" evidence="2">
    <location>
        <begin position="96"/>
        <end position="173"/>
    </location>
</feature>
<feature type="sequence conflict" description="In Ref. 7; AAH35750." evidence="3" ref="7">
    <original>R</original>
    <variation>T</variation>
    <location>
        <position position="272"/>
    </location>
</feature>
<feature type="helix" evidence="5">
    <location>
        <begin position="18"/>
        <end position="49"/>
    </location>
</feature>
<feature type="helix" evidence="5">
    <location>
        <begin position="57"/>
        <end position="73"/>
    </location>
</feature>
<feature type="helix" evidence="5">
    <location>
        <begin position="76"/>
        <end position="84"/>
    </location>
</feature>
<feature type="turn" evidence="4">
    <location>
        <begin position="85"/>
        <end position="87"/>
    </location>
</feature>
<feature type="helix" evidence="5">
    <location>
        <begin position="92"/>
        <end position="126"/>
    </location>
</feature>
<feature type="turn" evidence="4">
    <location>
        <begin position="128"/>
        <end position="130"/>
    </location>
</feature>
<feature type="helix" evidence="5">
    <location>
        <begin position="131"/>
        <end position="134"/>
    </location>
</feature>
<feature type="helix" evidence="5">
    <location>
        <begin position="137"/>
        <end position="154"/>
    </location>
</feature>
<feature type="helix" evidence="5">
    <location>
        <begin position="156"/>
        <end position="158"/>
    </location>
</feature>
<feature type="helix" evidence="5">
    <location>
        <begin position="184"/>
        <end position="197"/>
    </location>
</feature>
<feature type="helix" evidence="5">
    <location>
        <begin position="199"/>
        <end position="222"/>
    </location>
</feature>
<feature type="helix" evidence="5">
    <location>
        <begin position="227"/>
        <end position="244"/>
    </location>
</feature>
<feature type="helix" evidence="5">
    <location>
        <begin position="246"/>
        <end position="259"/>
    </location>
</feature>
<feature type="helix" evidence="5">
    <location>
        <begin position="267"/>
        <end position="285"/>
    </location>
</feature>
<feature type="helix" evidence="5">
    <location>
        <begin position="286"/>
        <end position="289"/>
    </location>
</feature>
<feature type="helix" evidence="5">
    <location>
        <begin position="290"/>
        <end position="298"/>
    </location>
</feature>
<sequence length="337" mass="38541">MDETGNLTVSSATCHDTIDDFRNQVYSTLYSMISVVGFFGNGFVLYVLIKTYHKKSAFQVYMINLAVADLLCVCTLPLRVVYYVHKGIWLFGDFLCRLSTYALYVNLYCSIFFMTAMSFFRCIAIVFPVQNINLVTQKKARFVCVGIWIFVILTSSPFLMAKPQKDEKNNTKCFEPPQDNQTKNHVLVLHYVSLFVGFIIPFVIIIVCYTMIILTLLKKSMKKNLSSHKKAIGMIMVVTAAFLVSFMPYHIQRTIHLHFLHNETKPCDSVLRMQKSVVITLSLAASNCCFDPLLYFFSGGNFRKRLSTFRKHSLSSVTYVPRKKASLPEKGEEICKV</sequence>